<dbReference type="EC" id="1.1.1.28"/>
<dbReference type="EMBL" id="AL935263">
    <property type="protein sequence ID" value="CCC79301.1"/>
    <property type="molecule type" value="Genomic_DNA"/>
</dbReference>
<dbReference type="RefSeq" id="WP_003640741.1">
    <property type="nucleotide sequence ID" value="NC_004567.2"/>
</dbReference>
<dbReference type="RefSeq" id="YP_004889815.1">
    <property type="nucleotide sequence ID" value="NC_004567.2"/>
</dbReference>
<dbReference type="SMR" id="Q88VJ2"/>
<dbReference type="STRING" id="220668.lp_2057"/>
<dbReference type="EnsemblBacteria" id="CCC79301">
    <property type="protein sequence ID" value="CCC79301"/>
    <property type="gene ID" value="lp_2057"/>
</dbReference>
<dbReference type="KEGG" id="lpl:lp_2057"/>
<dbReference type="PATRIC" id="fig|220668.9.peg.1742"/>
<dbReference type="eggNOG" id="COG1052">
    <property type="taxonomic scope" value="Bacteria"/>
</dbReference>
<dbReference type="HOGENOM" id="CLU_019796_1_1_9"/>
<dbReference type="OrthoDB" id="9805416at2"/>
<dbReference type="PhylomeDB" id="Q88VJ2"/>
<dbReference type="BioCyc" id="MetaCyc:MONOMER-8683"/>
<dbReference type="SABIO-RK" id="Q88VJ2"/>
<dbReference type="Proteomes" id="UP000000432">
    <property type="component" value="Chromosome"/>
</dbReference>
<dbReference type="GO" id="GO:0008720">
    <property type="term" value="F:D-lactate dehydrogenase activity"/>
    <property type="evidence" value="ECO:0007669"/>
    <property type="project" value="UniProtKB-EC"/>
</dbReference>
<dbReference type="GO" id="GO:0051287">
    <property type="term" value="F:NAD binding"/>
    <property type="evidence" value="ECO:0007669"/>
    <property type="project" value="InterPro"/>
</dbReference>
<dbReference type="CDD" id="cd12186">
    <property type="entry name" value="LDH"/>
    <property type="match status" value="1"/>
</dbReference>
<dbReference type="Gene3D" id="3.40.50.720">
    <property type="entry name" value="NAD(P)-binding Rossmann-like Domain"/>
    <property type="match status" value="2"/>
</dbReference>
<dbReference type="InterPro" id="IPR006139">
    <property type="entry name" value="D-isomer_2_OHA_DH_cat_dom"/>
</dbReference>
<dbReference type="InterPro" id="IPR029753">
    <property type="entry name" value="D-isomer_DH_CS"/>
</dbReference>
<dbReference type="InterPro" id="IPR029752">
    <property type="entry name" value="D-isomer_DH_CS1"/>
</dbReference>
<dbReference type="InterPro" id="IPR006140">
    <property type="entry name" value="D-isomer_DH_NAD-bd"/>
</dbReference>
<dbReference type="InterPro" id="IPR036291">
    <property type="entry name" value="NAD(P)-bd_dom_sf"/>
</dbReference>
<dbReference type="PANTHER" id="PTHR43026">
    <property type="entry name" value="2-HYDROXYACID DEHYDROGENASE HOMOLOG 1-RELATED"/>
    <property type="match status" value="1"/>
</dbReference>
<dbReference type="PANTHER" id="PTHR43026:SF1">
    <property type="entry name" value="2-HYDROXYACID DEHYDROGENASE HOMOLOG 1-RELATED"/>
    <property type="match status" value="1"/>
</dbReference>
<dbReference type="Pfam" id="PF00389">
    <property type="entry name" value="2-Hacid_dh"/>
    <property type="match status" value="1"/>
</dbReference>
<dbReference type="Pfam" id="PF02826">
    <property type="entry name" value="2-Hacid_dh_C"/>
    <property type="match status" value="1"/>
</dbReference>
<dbReference type="SUPFAM" id="SSF52283">
    <property type="entry name" value="Formate/glycerate dehydrogenase catalytic domain-like"/>
    <property type="match status" value="1"/>
</dbReference>
<dbReference type="SUPFAM" id="SSF51735">
    <property type="entry name" value="NAD(P)-binding Rossmann-fold domains"/>
    <property type="match status" value="1"/>
</dbReference>
<dbReference type="PROSITE" id="PS00065">
    <property type="entry name" value="D_2_HYDROXYACID_DH_1"/>
    <property type="match status" value="1"/>
</dbReference>
<dbReference type="PROSITE" id="PS00670">
    <property type="entry name" value="D_2_HYDROXYACID_DH_2"/>
    <property type="match status" value="1"/>
</dbReference>
<dbReference type="PROSITE" id="PS00671">
    <property type="entry name" value="D_2_HYDROXYACID_DH_3"/>
    <property type="match status" value="1"/>
</dbReference>
<feature type="chain" id="PRO_0000075955" description="D-lactate dehydrogenase">
    <location>
        <begin position="1"/>
        <end position="332"/>
    </location>
</feature>
<feature type="active site" evidence="1">
    <location>
        <position position="235"/>
    </location>
</feature>
<feature type="active site" evidence="1">
    <location>
        <position position="264"/>
    </location>
</feature>
<feature type="active site" description="Proton donor" evidence="1">
    <location>
        <position position="296"/>
    </location>
</feature>
<feature type="binding site" evidence="2">
    <location>
        <begin position="155"/>
        <end position="156"/>
    </location>
    <ligand>
        <name>NAD(+)</name>
        <dbReference type="ChEBI" id="CHEBI:57540"/>
    </ligand>
</feature>
<feature type="binding site" evidence="1">
    <location>
        <position position="175"/>
    </location>
    <ligand>
        <name>NAD(+)</name>
        <dbReference type="ChEBI" id="CHEBI:57540"/>
    </ligand>
</feature>
<feature type="binding site" evidence="2">
    <location>
        <begin position="206"/>
        <end position="207"/>
    </location>
    <ligand>
        <name>NAD(+)</name>
        <dbReference type="ChEBI" id="CHEBI:57540"/>
    </ligand>
</feature>
<feature type="binding site" evidence="2">
    <location>
        <position position="212"/>
    </location>
    <ligand>
        <name>NAD(+)</name>
        <dbReference type="ChEBI" id="CHEBI:57540"/>
    </ligand>
</feature>
<feature type="binding site" evidence="2">
    <location>
        <begin position="233"/>
        <end position="235"/>
    </location>
    <ligand>
        <name>NAD(+)</name>
        <dbReference type="ChEBI" id="CHEBI:57540"/>
    </ligand>
</feature>
<feature type="binding site" evidence="2">
    <location>
        <position position="259"/>
    </location>
    <ligand>
        <name>NAD(+)</name>
        <dbReference type="ChEBI" id="CHEBI:57540"/>
    </ligand>
</feature>
<name>LDHD_LACPL</name>
<organism>
    <name type="scientific">Lactiplantibacillus plantarum (strain ATCC BAA-793 / NCIMB 8826 / WCFS1)</name>
    <name type="common">Lactobacillus plantarum</name>
    <dbReference type="NCBI Taxonomy" id="220668"/>
    <lineage>
        <taxon>Bacteria</taxon>
        <taxon>Bacillati</taxon>
        <taxon>Bacillota</taxon>
        <taxon>Bacilli</taxon>
        <taxon>Lactobacillales</taxon>
        <taxon>Lactobacillaceae</taxon>
        <taxon>Lactiplantibacillus</taxon>
    </lineage>
</organism>
<keyword id="KW-0520">NAD</keyword>
<keyword id="KW-0560">Oxidoreductase</keyword>
<keyword id="KW-1185">Reference proteome</keyword>
<protein>
    <recommendedName>
        <fullName>D-lactate dehydrogenase</fullName>
        <shortName>D-LDH</shortName>
        <ecNumber>1.1.1.28</ecNumber>
    </recommendedName>
</protein>
<accession>Q88VJ2</accession>
<accession>F9UQ12</accession>
<gene>
    <name type="primary">ldhD</name>
    <name type="ordered locus">lp_2057</name>
</gene>
<evidence type="ECO:0000250" key="1">
    <source>
        <dbReference type="UniProtKB" id="P26297"/>
    </source>
</evidence>
<evidence type="ECO:0000250" key="2">
    <source>
        <dbReference type="UniProtKB" id="P30901"/>
    </source>
</evidence>
<evidence type="ECO:0000305" key="3"/>
<sequence length="332" mass="37181">MKIIAYAVRDDERPFFDTWMKENPDVEVKLVPELLTEDNVDLAKGFDGADVYQQKDYTAEVLNKLADEGVKNISLRNVGVDNLDVPTVKARGLNISNVPAYSPNAIAELSVTQLMQLLRQTPLFNKKLAKQDFRWAPDIAKELNTMTVGVIGTGRIGRAAIDIFKGFGAKVIGYDVYRNAELEKEGMYVDTLDELYAQADVITLHVPALKDNYHMLNADAFSKMKDGAYILNFARGTLIDSEDLIKALDSGKVAGAALDTYEYETKIFNKDLEGQTIDDKVFMNLFNRDNVLITPHTAFYTETAVHNMVHVSMNSNKQFIETGKADTQVKFD</sequence>
<proteinExistence type="inferred from homology"/>
<reference key="1">
    <citation type="journal article" date="2003" name="Proc. Natl. Acad. Sci. U.S.A.">
        <title>Complete genome sequence of Lactobacillus plantarum WCFS1.</title>
        <authorList>
            <person name="Kleerebezem M."/>
            <person name="Boekhorst J."/>
            <person name="van Kranenburg R."/>
            <person name="Molenaar D."/>
            <person name="Kuipers O.P."/>
            <person name="Leer R."/>
            <person name="Tarchini R."/>
            <person name="Peters S.A."/>
            <person name="Sandbrink H.M."/>
            <person name="Fiers M.W.E.J."/>
            <person name="Stiekema W."/>
            <person name="Klein Lankhorst R.M."/>
            <person name="Bron P.A."/>
            <person name="Hoffer S.M."/>
            <person name="Nierop Groot M.N."/>
            <person name="Kerkhoven R."/>
            <person name="De Vries M."/>
            <person name="Ursing B."/>
            <person name="De Vos W.M."/>
            <person name="Siezen R.J."/>
        </authorList>
    </citation>
    <scope>NUCLEOTIDE SEQUENCE [LARGE SCALE GENOMIC DNA]</scope>
    <source>
        <strain>ATCC BAA-793 / NCIMB 8826 / WCFS1</strain>
    </source>
</reference>
<reference key="2">
    <citation type="journal article" date="2012" name="J. Bacteriol.">
        <title>Complete resequencing and reannotation of the Lactobacillus plantarum WCFS1 genome.</title>
        <authorList>
            <person name="Siezen R.J."/>
            <person name="Francke C."/>
            <person name="Renckens B."/>
            <person name="Boekhorst J."/>
            <person name="Wels M."/>
            <person name="Kleerebezem M."/>
            <person name="van Hijum S.A."/>
        </authorList>
    </citation>
    <scope>NUCLEOTIDE SEQUENCE [LARGE SCALE GENOMIC DNA]</scope>
    <scope>GENOME REANNOTATION</scope>
    <source>
        <strain>ATCC BAA-793 / NCIMB 8826 / WCFS1</strain>
    </source>
</reference>
<comment type="catalytic activity">
    <reaction>
        <text>(R)-lactate + NAD(+) = pyruvate + NADH + H(+)</text>
        <dbReference type="Rhea" id="RHEA:16369"/>
        <dbReference type="ChEBI" id="CHEBI:15361"/>
        <dbReference type="ChEBI" id="CHEBI:15378"/>
        <dbReference type="ChEBI" id="CHEBI:16004"/>
        <dbReference type="ChEBI" id="CHEBI:57540"/>
        <dbReference type="ChEBI" id="CHEBI:57945"/>
        <dbReference type="EC" id="1.1.1.28"/>
    </reaction>
</comment>
<comment type="similarity">
    <text evidence="3">Belongs to the D-isomer specific 2-hydroxyacid dehydrogenase family.</text>
</comment>